<keyword id="KW-0067">ATP-binding</keyword>
<keyword id="KW-0963">Cytoplasm</keyword>
<keyword id="KW-0237">DNA synthesis</keyword>
<keyword id="KW-0418">Kinase</keyword>
<keyword id="KW-0479">Metal-binding</keyword>
<keyword id="KW-0547">Nucleotide-binding</keyword>
<keyword id="KW-1185">Reference proteome</keyword>
<keyword id="KW-0808">Transferase</keyword>
<keyword id="KW-0862">Zinc</keyword>
<proteinExistence type="inferred from homology"/>
<accession>Q7N457</accession>
<organism>
    <name type="scientific">Photorhabdus laumondii subsp. laumondii (strain DSM 15139 / CIP 105565 / TT01)</name>
    <name type="common">Photorhabdus luminescens subsp. laumondii</name>
    <dbReference type="NCBI Taxonomy" id="243265"/>
    <lineage>
        <taxon>Bacteria</taxon>
        <taxon>Pseudomonadati</taxon>
        <taxon>Pseudomonadota</taxon>
        <taxon>Gammaproteobacteria</taxon>
        <taxon>Enterobacterales</taxon>
        <taxon>Morganellaceae</taxon>
        <taxon>Photorhabdus</taxon>
    </lineage>
</organism>
<feature type="chain" id="PRO_0000175003" description="Thymidine kinase">
    <location>
        <begin position="1"/>
        <end position="201"/>
    </location>
</feature>
<feature type="active site" description="Proton acceptor" evidence="1">
    <location>
        <position position="88"/>
    </location>
</feature>
<feature type="binding site" evidence="1">
    <location>
        <begin position="9"/>
        <end position="16"/>
    </location>
    <ligand>
        <name>ATP</name>
        <dbReference type="ChEBI" id="CHEBI:30616"/>
    </ligand>
</feature>
<feature type="binding site" evidence="1">
    <location>
        <begin position="87"/>
        <end position="90"/>
    </location>
    <ligand>
        <name>ATP</name>
        <dbReference type="ChEBI" id="CHEBI:30616"/>
    </ligand>
</feature>
<feature type="binding site" evidence="1">
    <location>
        <position position="145"/>
    </location>
    <ligand>
        <name>Zn(2+)</name>
        <dbReference type="ChEBI" id="CHEBI:29105"/>
    </ligand>
</feature>
<feature type="binding site" evidence="1">
    <location>
        <position position="147"/>
    </location>
    <ligand>
        <name>Zn(2+)</name>
        <dbReference type="ChEBI" id="CHEBI:29105"/>
    </ligand>
</feature>
<feature type="binding site" evidence="1">
    <location>
        <position position="182"/>
    </location>
    <ligand>
        <name>Zn(2+)</name>
        <dbReference type="ChEBI" id="CHEBI:29105"/>
    </ligand>
</feature>
<feature type="binding site" evidence="1">
    <location>
        <position position="185"/>
    </location>
    <ligand>
        <name>Zn(2+)</name>
        <dbReference type="ChEBI" id="CHEBI:29105"/>
    </ligand>
</feature>
<protein>
    <recommendedName>
        <fullName evidence="1">Thymidine kinase</fullName>
        <ecNumber evidence="1">2.7.1.21</ecNumber>
    </recommendedName>
</protein>
<dbReference type="EC" id="2.7.1.21" evidence="1"/>
<dbReference type="EMBL" id="BX571867">
    <property type="protein sequence ID" value="CAE14871.1"/>
    <property type="molecule type" value="Genomic_DNA"/>
</dbReference>
<dbReference type="RefSeq" id="WP_011146720.1">
    <property type="nucleotide sequence ID" value="NC_005126.1"/>
</dbReference>
<dbReference type="SMR" id="Q7N457"/>
<dbReference type="STRING" id="243265.plu2497"/>
<dbReference type="GeneID" id="48848762"/>
<dbReference type="KEGG" id="plu:plu2497"/>
<dbReference type="eggNOG" id="COG1435">
    <property type="taxonomic scope" value="Bacteria"/>
</dbReference>
<dbReference type="HOGENOM" id="CLU_064400_2_1_6"/>
<dbReference type="OrthoDB" id="9781579at2"/>
<dbReference type="Proteomes" id="UP000002514">
    <property type="component" value="Chromosome"/>
</dbReference>
<dbReference type="GO" id="GO:0005829">
    <property type="term" value="C:cytosol"/>
    <property type="evidence" value="ECO:0007669"/>
    <property type="project" value="TreeGrafter"/>
</dbReference>
<dbReference type="GO" id="GO:0005524">
    <property type="term" value="F:ATP binding"/>
    <property type="evidence" value="ECO:0007669"/>
    <property type="project" value="UniProtKB-UniRule"/>
</dbReference>
<dbReference type="GO" id="GO:0004797">
    <property type="term" value="F:thymidine kinase activity"/>
    <property type="evidence" value="ECO:0007669"/>
    <property type="project" value="UniProtKB-UniRule"/>
</dbReference>
<dbReference type="GO" id="GO:0008270">
    <property type="term" value="F:zinc ion binding"/>
    <property type="evidence" value="ECO:0007669"/>
    <property type="project" value="UniProtKB-UniRule"/>
</dbReference>
<dbReference type="GO" id="GO:0071897">
    <property type="term" value="P:DNA biosynthetic process"/>
    <property type="evidence" value="ECO:0007669"/>
    <property type="project" value="UniProtKB-KW"/>
</dbReference>
<dbReference type="GO" id="GO:0046104">
    <property type="term" value="P:thymidine metabolic process"/>
    <property type="evidence" value="ECO:0007669"/>
    <property type="project" value="TreeGrafter"/>
</dbReference>
<dbReference type="FunFam" id="3.40.50.300:FF:000323">
    <property type="entry name" value="Thymidine kinase"/>
    <property type="match status" value="1"/>
</dbReference>
<dbReference type="Gene3D" id="3.30.60.20">
    <property type="match status" value="1"/>
</dbReference>
<dbReference type="Gene3D" id="3.40.50.300">
    <property type="entry name" value="P-loop containing nucleotide triphosphate hydrolases"/>
    <property type="match status" value="1"/>
</dbReference>
<dbReference type="HAMAP" id="MF_00124">
    <property type="entry name" value="Thymidine_kinase"/>
    <property type="match status" value="1"/>
</dbReference>
<dbReference type="InterPro" id="IPR027417">
    <property type="entry name" value="P-loop_NTPase"/>
</dbReference>
<dbReference type="InterPro" id="IPR001267">
    <property type="entry name" value="Thymidine_kinase"/>
</dbReference>
<dbReference type="InterPro" id="IPR020633">
    <property type="entry name" value="Thymidine_kinase_CS"/>
</dbReference>
<dbReference type="NCBIfam" id="NF003300">
    <property type="entry name" value="PRK04296.1-5"/>
    <property type="match status" value="1"/>
</dbReference>
<dbReference type="PANTHER" id="PTHR11441">
    <property type="entry name" value="THYMIDINE KINASE"/>
    <property type="match status" value="1"/>
</dbReference>
<dbReference type="PANTHER" id="PTHR11441:SF0">
    <property type="entry name" value="THYMIDINE KINASE, CYTOSOLIC"/>
    <property type="match status" value="1"/>
</dbReference>
<dbReference type="Pfam" id="PF00265">
    <property type="entry name" value="TK"/>
    <property type="match status" value="1"/>
</dbReference>
<dbReference type="PIRSF" id="PIRSF035805">
    <property type="entry name" value="TK_cell"/>
    <property type="match status" value="1"/>
</dbReference>
<dbReference type="SUPFAM" id="SSF57716">
    <property type="entry name" value="Glucocorticoid receptor-like (DNA-binding domain)"/>
    <property type="match status" value="1"/>
</dbReference>
<dbReference type="SUPFAM" id="SSF52540">
    <property type="entry name" value="P-loop containing nucleoside triphosphate hydrolases"/>
    <property type="match status" value="1"/>
</dbReference>
<dbReference type="PROSITE" id="PS00603">
    <property type="entry name" value="TK_CELLULAR_TYPE"/>
    <property type="match status" value="1"/>
</dbReference>
<comment type="catalytic activity">
    <reaction evidence="1">
        <text>thymidine + ATP = dTMP + ADP + H(+)</text>
        <dbReference type="Rhea" id="RHEA:19129"/>
        <dbReference type="ChEBI" id="CHEBI:15378"/>
        <dbReference type="ChEBI" id="CHEBI:17748"/>
        <dbReference type="ChEBI" id="CHEBI:30616"/>
        <dbReference type="ChEBI" id="CHEBI:63528"/>
        <dbReference type="ChEBI" id="CHEBI:456216"/>
        <dbReference type="EC" id="2.7.1.21"/>
    </reaction>
</comment>
<comment type="subunit">
    <text evidence="1">Homotetramer.</text>
</comment>
<comment type="subcellular location">
    <subcellularLocation>
        <location evidence="1">Cytoplasm</location>
    </subcellularLocation>
</comment>
<comment type="similarity">
    <text evidence="1">Belongs to the thymidine kinase family.</text>
</comment>
<evidence type="ECO:0000255" key="1">
    <source>
        <dbReference type="HAMAP-Rule" id="MF_00124"/>
    </source>
</evidence>
<reference key="1">
    <citation type="journal article" date="2003" name="Nat. Biotechnol.">
        <title>The genome sequence of the entomopathogenic bacterium Photorhabdus luminescens.</title>
        <authorList>
            <person name="Duchaud E."/>
            <person name="Rusniok C."/>
            <person name="Frangeul L."/>
            <person name="Buchrieser C."/>
            <person name="Givaudan A."/>
            <person name="Taourit S."/>
            <person name="Bocs S."/>
            <person name="Boursaux-Eude C."/>
            <person name="Chandler M."/>
            <person name="Charles J.-F."/>
            <person name="Dassa E."/>
            <person name="Derose R."/>
            <person name="Derzelle S."/>
            <person name="Freyssinet G."/>
            <person name="Gaudriault S."/>
            <person name="Medigue C."/>
            <person name="Lanois A."/>
            <person name="Powell K."/>
            <person name="Siguier P."/>
            <person name="Vincent R."/>
            <person name="Wingate V."/>
            <person name="Zouine M."/>
            <person name="Glaser P."/>
            <person name="Boemare N."/>
            <person name="Danchin A."/>
            <person name="Kunst F."/>
        </authorList>
    </citation>
    <scope>NUCLEOTIDE SEQUENCE [LARGE SCALE GENOMIC DNA]</scope>
    <source>
        <strain>DSM 15139 / CIP 105565 / TT01</strain>
    </source>
</reference>
<name>KITH_PHOLL</name>
<sequence length="201" mass="22954">MAQLYFYYSAMNAGKSTSLLQSSYNYNERGMRTLVFTAEIDTRFENGKVNSRIGLSSDALLFSQQTDIGELIRNENKQAKVHCVLIDECHFLTKAQIEQICKVTDYDDIPVLCYGLRTDFRGELFSGSQYLLAWADKLVELKTICYCGRKANRVLRFDSEGAAIYDGEQVDIGGNEKYVSVCRKHYMEAINEARKNRKDSV</sequence>
<gene>
    <name evidence="1" type="primary">tdk</name>
    <name type="ordered locus">plu2497</name>
</gene>